<protein>
    <recommendedName>
        <fullName>Alcohol dehydrogenase class-3</fullName>
        <ecNumber evidence="2">1.1.1.1</ecNumber>
    </recommendedName>
    <alternativeName>
        <fullName>Alcohol dehydrogenase class-III</fullName>
    </alternativeName>
    <alternativeName>
        <fullName>Glutathione-dependent formaldehyde dehydrogenase</fullName>
        <shortName>FALDH</shortName>
        <shortName>FDH</shortName>
        <shortName>GSH-FDH</shortName>
        <ecNumber>1.1.1.-</ecNumber>
    </alternativeName>
    <alternativeName>
        <fullName>Octanol dehydrogenase</fullName>
        <ecNumber evidence="2">1.1.1.73</ecNumber>
    </alternativeName>
    <alternativeName>
        <fullName>S-(hydroxymethyl)glutathione dehydrogenase</fullName>
        <ecNumber evidence="2">1.1.1.284</ecNumber>
    </alternativeName>
</protein>
<sequence>MSATEGKVITCKAAVAWEAKKPLVIEDIEVAPPKAHEVRIKITATGVCHTDAFTLSGADPEGLFPVVLGHEGAGIVESVGEGVTNFKAGDHVIALYIPQCNECKFCKSGKTNLCQKIRLTQGAGVMPEGTSRLSCKGQQLFHFMGTSTFAEYTVVADISLTKINEKAPLEKVCLLGCGISTGYGAALNTAKVEAGSTCAVWGLGAVGLAVGLGCKKAGAGKIYGIDINPDKFELAKKFGFTDFVNPKDVADKGSIQNYLIDLTDGGFDYTFECIGNVNTMRSALEATHKGWGTSVVIGVAGAGQEISTRPFQLVVGRVWKGSAFGGWRSVSDVPKLVEDYLKKDLLVDEFITHELPLSQINEAFDLMHKGESIRSIIKY</sequence>
<accession>P46415</accession>
<accession>Q9VGV2</accession>
<feature type="initiator methionine" description="Removed" evidence="3">
    <location>
        <position position="1"/>
    </location>
</feature>
<feature type="chain" id="PRO_0000160769" description="Alcohol dehydrogenase class-3">
    <location>
        <begin position="2"/>
        <end position="379"/>
    </location>
</feature>
<feature type="binding site" evidence="1">
    <location>
        <position position="48"/>
    </location>
    <ligand>
        <name>Zn(2+)</name>
        <dbReference type="ChEBI" id="CHEBI:29105"/>
        <label>1</label>
        <note>catalytic</note>
    </ligand>
</feature>
<feature type="binding site" evidence="1">
    <location>
        <position position="70"/>
    </location>
    <ligand>
        <name>Zn(2+)</name>
        <dbReference type="ChEBI" id="CHEBI:29105"/>
        <label>1</label>
        <note>catalytic</note>
    </ligand>
</feature>
<feature type="binding site" evidence="1">
    <location>
        <position position="100"/>
    </location>
    <ligand>
        <name>Zn(2+)</name>
        <dbReference type="ChEBI" id="CHEBI:29105"/>
        <label>2</label>
    </ligand>
</feature>
<feature type="binding site" evidence="1">
    <location>
        <position position="103"/>
    </location>
    <ligand>
        <name>Zn(2+)</name>
        <dbReference type="ChEBI" id="CHEBI:29105"/>
        <label>2</label>
    </ligand>
</feature>
<feature type="binding site" evidence="1">
    <location>
        <position position="106"/>
    </location>
    <ligand>
        <name>Zn(2+)</name>
        <dbReference type="ChEBI" id="CHEBI:29105"/>
        <label>2</label>
    </ligand>
</feature>
<feature type="binding site" evidence="1">
    <location>
        <position position="114"/>
    </location>
    <ligand>
        <name>Zn(2+)</name>
        <dbReference type="ChEBI" id="CHEBI:29105"/>
        <label>2</label>
    </ligand>
</feature>
<feature type="binding site" evidence="1">
    <location>
        <position position="177"/>
    </location>
    <ligand>
        <name>Zn(2+)</name>
        <dbReference type="ChEBI" id="CHEBI:29105"/>
        <label>1</label>
        <note>catalytic</note>
    </ligand>
</feature>
<feature type="modified residue" description="N-acetylserine" evidence="4">
    <location>
        <position position="2"/>
    </location>
</feature>
<organism>
    <name type="scientific">Drosophila melanogaster</name>
    <name type="common">Fruit fly</name>
    <dbReference type="NCBI Taxonomy" id="7227"/>
    <lineage>
        <taxon>Eukaryota</taxon>
        <taxon>Metazoa</taxon>
        <taxon>Ecdysozoa</taxon>
        <taxon>Arthropoda</taxon>
        <taxon>Hexapoda</taxon>
        <taxon>Insecta</taxon>
        <taxon>Pterygota</taxon>
        <taxon>Neoptera</taxon>
        <taxon>Endopterygota</taxon>
        <taxon>Diptera</taxon>
        <taxon>Brachycera</taxon>
        <taxon>Muscomorpha</taxon>
        <taxon>Ephydroidea</taxon>
        <taxon>Drosophilidae</taxon>
        <taxon>Drosophila</taxon>
        <taxon>Sophophora</taxon>
    </lineage>
</organism>
<gene>
    <name type="primary">Fdh</name>
    <name type="synonym">gfd</name>
    <name type="synonym">ODH</name>
    <name type="ORF">CG6598</name>
</gene>
<evidence type="ECO:0000250" key="1">
    <source>
        <dbReference type="UniProtKB" id="P11766"/>
    </source>
</evidence>
<evidence type="ECO:0000269" key="2">
    <source>
    </source>
</evidence>
<evidence type="ECO:0000305" key="3"/>
<evidence type="ECO:0000305" key="4">
    <source>
    </source>
</evidence>
<proteinExistence type="evidence at protein level"/>
<dbReference type="EC" id="1.1.1.1" evidence="2"/>
<dbReference type="EC" id="1.1.1.-"/>
<dbReference type="EC" id="1.1.1.73" evidence="2"/>
<dbReference type="EC" id="1.1.1.284" evidence="2"/>
<dbReference type="EMBL" id="U07799">
    <property type="protein sequence ID" value="AAA57187.1"/>
    <property type="molecule type" value="Genomic_DNA"/>
</dbReference>
<dbReference type="EMBL" id="U07641">
    <property type="protein sequence ID" value="AAB02520.1"/>
    <property type="molecule type" value="mRNA"/>
</dbReference>
<dbReference type="EMBL" id="AE014297">
    <property type="protein sequence ID" value="AAF54571.1"/>
    <property type="molecule type" value="Genomic_DNA"/>
</dbReference>
<dbReference type="EMBL" id="AY089518">
    <property type="protein sequence ID" value="AAL90256.1"/>
    <property type="molecule type" value="mRNA"/>
</dbReference>
<dbReference type="EMBL" id="AY089615">
    <property type="protein sequence ID" value="AAL90353.1"/>
    <property type="molecule type" value="mRNA"/>
</dbReference>
<dbReference type="PIR" id="S51357">
    <property type="entry name" value="S51357"/>
</dbReference>
<dbReference type="RefSeq" id="NP_524310.1">
    <property type="nucleotide sequence ID" value="NM_079586.4"/>
</dbReference>
<dbReference type="SMR" id="P46415"/>
<dbReference type="BioGRID" id="66455">
    <property type="interactions" value="5"/>
</dbReference>
<dbReference type="DIP" id="DIP-23839N"/>
<dbReference type="FunCoup" id="P46415">
    <property type="interactions" value="1603"/>
</dbReference>
<dbReference type="IntAct" id="P46415">
    <property type="interactions" value="8"/>
</dbReference>
<dbReference type="STRING" id="7227.FBpp0081767"/>
<dbReference type="iPTMnet" id="P46415"/>
<dbReference type="PaxDb" id="7227-FBpp0081767"/>
<dbReference type="DNASU" id="41311"/>
<dbReference type="EnsemblMetazoa" id="FBtr0082290">
    <property type="protein sequence ID" value="FBpp0081767"/>
    <property type="gene ID" value="FBgn0011768"/>
</dbReference>
<dbReference type="GeneID" id="41311"/>
<dbReference type="KEGG" id="dme:Dmel_CG6598"/>
<dbReference type="AGR" id="FB:FBgn0011768"/>
<dbReference type="CTD" id="41311"/>
<dbReference type="FlyBase" id="FBgn0011768">
    <property type="gene designation" value="Fdh"/>
</dbReference>
<dbReference type="VEuPathDB" id="VectorBase:FBgn0011768"/>
<dbReference type="eggNOG" id="KOG0022">
    <property type="taxonomic scope" value="Eukaryota"/>
</dbReference>
<dbReference type="GeneTree" id="ENSGT00940000164379"/>
<dbReference type="HOGENOM" id="CLU_026673_14_0_1"/>
<dbReference type="InParanoid" id="P46415"/>
<dbReference type="OMA" id="IKGRSEM"/>
<dbReference type="OrthoDB" id="417550at2759"/>
<dbReference type="PhylomeDB" id="P46415"/>
<dbReference type="Reactome" id="R-DME-2161541">
    <property type="pathway name" value="Abacavir metabolism"/>
</dbReference>
<dbReference type="Reactome" id="R-DME-5365859">
    <property type="pathway name" value="RA biosynthesis pathway"/>
</dbReference>
<dbReference type="Reactome" id="R-DME-71384">
    <property type="pathway name" value="Ethanol oxidation"/>
</dbReference>
<dbReference type="SABIO-RK" id="P46415"/>
<dbReference type="BioGRID-ORCS" id="41311">
    <property type="hits" value="0 hits in 3 CRISPR screens"/>
</dbReference>
<dbReference type="GenomeRNAi" id="41311"/>
<dbReference type="PRO" id="PR:P46415"/>
<dbReference type="Proteomes" id="UP000000803">
    <property type="component" value="Chromosome 3R"/>
</dbReference>
<dbReference type="Bgee" id="FBgn0011768">
    <property type="expression patterns" value="Expressed in spermathecum and 134 other cell types or tissues"/>
</dbReference>
<dbReference type="GO" id="GO:0005829">
    <property type="term" value="C:cytosol"/>
    <property type="evidence" value="ECO:0000318"/>
    <property type="project" value="GO_Central"/>
</dbReference>
<dbReference type="GO" id="GO:0004022">
    <property type="term" value="F:alcohol dehydrogenase (NAD+) activity"/>
    <property type="evidence" value="ECO:0000314"/>
    <property type="project" value="FlyBase"/>
</dbReference>
<dbReference type="GO" id="GO:0004552">
    <property type="term" value="F:octanol dehydrogenase (NAD+) activity"/>
    <property type="evidence" value="ECO:0000314"/>
    <property type="project" value="FlyBase"/>
</dbReference>
<dbReference type="GO" id="GO:0106322">
    <property type="term" value="F:S-(hydroxymethyl)glutathione dehydrogenase (NAD+) activity"/>
    <property type="evidence" value="ECO:0007669"/>
    <property type="project" value="RHEA"/>
</dbReference>
<dbReference type="GO" id="GO:0106321">
    <property type="term" value="F:S-(hydroxymethyl)glutathione dehydrogenase (NADP+) activity"/>
    <property type="evidence" value="ECO:0007669"/>
    <property type="project" value="RHEA"/>
</dbReference>
<dbReference type="GO" id="GO:0051903">
    <property type="term" value="F:S-(hydroxymethyl)glutathione dehydrogenase [NAD(P)+] activity"/>
    <property type="evidence" value="ECO:0000314"/>
    <property type="project" value="FlyBase"/>
</dbReference>
<dbReference type="GO" id="GO:0080007">
    <property type="term" value="F:S-nitrosoglutathione reductase (NADH) activity"/>
    <property type="evidence" value="ECO:0000315"/>
    <property type="project" value="FlyBase"/>
</dbReference>
<dbReference type="GO" id="GO:0008270">
    <property type="term" value="F:zinc ion binding"/>
    <property type="evidence" value="ECO:0000318"/>
    <property type="project" value="GO_Central"/>
</dbReference>
<dbReference type="GO" id="GO:0006066">
    <property type="term" value="P:alcohol metabolic process"/>
    <property type="evidence" value="ECO:0000305"/>
    <property type="project" value="FlyBase"/>
</dbReference>
<dbReference type="GO" id="GO:0046294">
    <property type="term" value="P:formaldehyde catabolic process"/>
    <property type="evidence" value="ECO:0000318"/>
    <property type="project" value="GO_Central"/>
</dbReference>
<dbReference type="GO" id="GO:0080164">
    <property type="term" value="P:regulation of nitric oxide metabolic process"/>
    <property type="evidence" value="ECO:0000305"/>
    <property type="project" value="FlyBase"/>
</dbReference>
<dbReference type="GO" id="GO:0008542">
    <property type="term" value="P:visual learning"/>
    <property type="evidence" value="ECO:0000315"/>
    <property type="project" value="FlyBase"/>
</dbReference>
<dbReference type="CDD" id="cd08300">
    <property type="entry name" value="alcohol_DH_class_III"/>
    <property type="match status" value="1"/>
</dbReference>
<dbReference type="FunFam" id="3.40.50.720:FF:000003">
    <property type="entry name" value="S-(hydroxymethyl)glutathione dehydrogenase"/>
    <property type="match status" value="1"/>
</dbReference>
<dbReference type="FunFam" id="3.90.180.10:FF:000001">
    <property type="entry name" value="S-(hydroxymethyl)glutathione dehydrogenase"/>
    <property type="match status" value="1"/>
</dbReference>
<dbReference type="Gene3D" id="3.90.180.10">
    <property type="entry name" value="Medium-chain alcohol dehydrogenases, catalytic domain"/>
    <property type="match status" value="1"/>
</dbReference>
<dbReference type="Gene3D" id="3.40.50.720">
    <property type="entry name" value="NAD(P)-binding Rossmann-like Domain"/>
    <property type="match status" value="1"/>
</dbReference>
<dbReference type="InterPro" id="IPR013149">
    <property type="entry name" value="ADH-like_C"/>
</dbReference>
<dbReference type="InterPro" id="IPR013154">
    <property type="entry name" value="ADH-like_N"/>
</dbReference>
<dbReference type="InterPro" id="IPR014183">
    <property type="entry name" value="ADH_3"/>
</dbReference>
<dbReference type="InterPro" id="IPR002328">
    <property type="entry name" value="ADH_Zn_CS"/>
</dbReference>
<dbReference type="InterPro" id="IPR011032">
    <property type="entry name" value="GroES-like_sf"/>
</dbReference>
<dbReference type="InterPro" id="IPR036291">
    <property type="entry name" value="NAD(P)-bd_dom_sf"/>
</dbReference>
<dbReference type="NCBIfam" id="TIGR02818">
    <property type="entry name" value="adh_III_F_hyde"/>
    <property type="match status" value="1"/>
</dbReference>
<dbReference type="PANTHER" id="PTHR43880">
    <property type="entry name" value="ALCOHOL DEHYDROGENASE"/>
    <property type="match status" value="1"/>
</dbReference>
<dbReference type="PANTHER" id="PTHR43880:SF12">
    <property type="entry name" value="ALCOHOL DEHYDROGENASE CLASS-3"/>
    <property type="match status" value="1"/>
</dbReference>
<dbReference type="Pfam" id="PF08240">
    <property type="entry name" value="ADH_N"/>
    <property type="match status" value="1"/>
</dbReference>
<dbReference type="Pfam" id="PF00107">
    <property type="entry name" value="ADH_zinc_N"/>
    <property type="match status" value="1"/>
</dbReference>
<dbReference type="SUPFAM" id="SSF50129">
    <property type="entry name" value="GroES-like"/>
    <property type="match status" value="2"/>
</dbReference>
<dbReference type="SUPFAM" id="SSF51735">
    <property type="entry name" value="NAD(P)-binding Rossmann-fold domains"/>
    <property type="match status" value="1"/>
</dbReference>
<dbReference type="PROSITE" id="PS00059">
    <property type="entry name" value="ADH_ZINC"/>
    <property type="match status" value="1"/>
</dbReference>
<keyword id="KW-0007">Acetylation</keyword>
<keyword id="KW-0903">Direct protein sequencing</keyword>
<keyword id="KW-0479">Metal-binding</keyword>
<keyword id="KW-0520">NAD</keyword>
<keyword id="KW-0560">Oxidoreductase</keyword>
<keyword id="KW-1185">Reference proteome</keyword>
<keyword id="KW-0862">Zinc</keyword>
<name>ADHX_DROME</name>
<comment type="function">
    <text evidence="2">Class-III ADH is remarkably ineffective in oxidizing ethanol, but it readily catalyzes the oxidation of long-chain primary alcohols and the oxidation of S-(hydroxymethyl) glutathione.</text>
</comment>
<comment type="catalytic activity">
    <reaction evidence="2">
        <text>a primary alcohol + NAD(+) = an aldehyde + NADH + H(+)</text>
        <dbReference type="Rhea" id="RHEA:10736"/>
        <dbReference type="ChEBI" id="CHEBI:15378"/>
        <dbReference type="ChEBI" id="CHEBI:15734"/>
        <dbReference type="ChEBI" id="CHEBI:17478"/>
        <dbReference type="ChEBI" id="CHEBI:57540"/>
        <dbReference type="ChEBI" id="CHEBI:57945"/>
        <dbReference type="EC" id="1.1.1.1"/>
    </reaction>
</comment>
<comment type="catalytic activity">
    <reaction evidence="2">
        <text>a secondary alcohol + NAD(+) = a ketone + NADH + H(+)</text>
        <dbReference type="Rhea" id="RHEA:10740"/>
        <dbReference type="ChEBI" id="CHEBI:15378"/>
        <dbReference type="ChEBI" id="CHEBI:17087"/>
        <dbReference type="ChEBI" id="CHEBI:35681"/>
        <dbReference type="ChEBI" id="CHEBI:57540"/>
        <dbReference type="ChEBI" id="CHEBI:57945"/>
        <dbReference type="EC" id="1.1.1.1"/>
    </reaction>
</comment>
<comment type="catalytic activity">
    <reaction evidence="2">
        <text>S-(hydroxymethyl)glutathione + NADP(+) = S-formylglutathione + NADPH + H(+)</text>
        <dbReference type="Rhea" id="RHEA:19981"/>
        <dbReference type="ChEBI" id="CHEBI:15378"/>
        <dbReference type="ChEBI" id="CHEBI:57688"/>
        <dbReference type="ChEBI" id="CHEBI:57783"/>
        <dbReference type="ChEBI" id="CHEBI:58349"/>
        <dbReference type="ChEBI" id="CHEBI:58758"/>
        <dbReference type="EC" id="1.1.1.284"/>
    </reaction>
</comment>
<comment type="catalytic activity">
    <reaction evidence="2">
        <text>S-(hydroxymethyl)glutathione + NAD(+) = S-formylglutathione + NADH + H(+)</text>
        <dbReference type="Rhea" id="RHEA:19985"/>
        <dbReference type="ChEBI" id="CHEBI:15378"/>
        <dbReference type="ChEBI" id="CHEBI:57540"/>
        <dbReference type="ChEBI" id="CHEBI:57688"/>
        <dbReference type="ChEBI" id="CHEBI:57945"/>
        <dbReference type="ChEBI" id="CHEBI:58758"/>
        <dbReference type="EC" id="1.1.1.284"/>
    </reaction>
</comment>
<comment type="catalytic activity">
    <reaction evidence="2">
        <text>octan-1-ol + NAD(+) = octanal + NADH + H(+)</text>
        <dbReference type="Rhea" id="RHEA:24620"/>
        <dbReference type="ChEBI" id="CHEBI:15378"/>
        <dbReference type="ChEBI" id="CHEBI:16188"/>
        <dbReference type="ChEBI" id="CHEBI:17935"/>
        <dbReference type="ChEBI" id="CHEBI:57540"/>
        <dbReference type="ChEBI" id="CHEBI:57945"/>
        <dbReference type="EC" id="1.1.1.73"/>
    </reaction>
</comment>
<comment type="cofactor">
    <cofactor evidence="1">
        <name>Zn(2+)</name>
        <dbReference type="ChEBI" id="CHEBI:29105"/>
    </cofactor>
    <text evidence="1">Binds 2 Zn(2+) ions per subunit.</text>
</comment>
<comment type="similarity">
    <text evidence="3">Belongs to the zinc-containing alcohol dehydrogenase family. Class-III subfamily.</text>
</comment>
<reference key="1">
    <citation type="journal article" date="1994" name="Eur. J. Biochem.">
        <title>Structure of the Drosophila melanogaster glutathione-dependent formaldehyde dehydrogenase/octanol dehydrogenase gene (class III alcohol dehydrogenase). Evolutionary pathway of the alcohol dehydrogenase genes.</title>
        <authorList>
            <person name="Luque T."/>
            <person name="Atrian S."/>
            <person name="Danielsson O."/>
            <person name="Joernvall H."/>
            <person name="Gonzalez-Duarte R."/>
        </authorList>
    </citation>
    <scope>NUCLEOTIDE SEQUENCE [GENOMIC DNA]</scope>
</reference>
<reference key="2">
    <citation type="journal article" date="1994" name="Proc. Natl. Acad. Sci. U.S.A.">
        <title>Fundamental molecular differences between alcohol dehydrogenase classes.</title>
        <authorList>
            <person name="Danielsson O."/>
            <person name="Atrian S."/>
            <person name="Luque T."/>
            <person name="Hjelmqvist L."/>
            <person name="Gonzalez-Duarte R."/>
            <person name="Joernvall H."/>
        </authorList>
    </citation>
    <scope>NUCLEOTIDE SEQUENCE [MRNA]</scope>
    <scope>FUNCTION</scope>
    <scope>CATALYTIC ACTIVITY</scope>
    <scope>ACETYLATION AT SER-2</scope>
    <scope>PARTIAL PROTEIN SEQUENCE</scope>
</reference>
<reference key="3">
    <citation type="journal article" date="2000" name="Science">
        <title>The genome sequence of Drosophila melanogaster.</title>
        <authorList>
            <person name="Adams M.D."/>
            <person name="Celniker S.E."/>
            <person name="Holt R.A."/>
            <person name="Evans C.A."/>
            <person name="Gocayne J.D."/>
            <person name="Amanatides P.G."/>
            <person name="Scherer S.E."/>
            <person name="Li P.W."/>
            <person name="Hoskins R.A."/>
            <person name="Galle R.F."/>
            <person name="George R.A."/>
            <person name="Lewis S.E."/>
            <person name="Richards S."/>
            <person name="Ashburner M."/>
            <person name="Henderson S.N."/>
            <person name="Sutton G.G."/>
            <person name="Wortman J.R."/>
            <person name="Yandell M.D."/>
            <person name="Zhang Q."/>
            <person name="Chen L.X."/>
            <person name="Brandon R.C."/>
            <person name="Rogers Y.-H.C."/>
            <person name="Blazej R.G."/>
            <person name="Champe M."/>
            <person name="Pfeiffer B.D."/>
            <person name="Wan K.H."/>
            <person name="Doyle C."/>
            <person name="Baxter E.G."/>
            <person name="Helt G."/>
            <person name="Nelson C.R."/>
            <person name="Miklos G.L.G."/>
            <person name="Abril J.F."/>
            <person name="Agbayani A."/>
            <person name="An H.-J."/>
            <person name="Andrews-Pfannkoch C."/>
            <person name="Baldwin D."/>
            <person name="Ballew R.M."/>
            <person name="Basu A."/>
            <person name="Baxendale J."/>
            <person name="Bayraktaroglu L."/>
            <person name="Beasley E.M."/>
            <person name="Beeson K.Y."/>
            <person name="Benos P.V."/>
            <person name="Berman B.P."/>
            <person name="Bhandari D."/>
            <person name="Bolshakov S."/>
            <person name="Borkova D."/>
            <person name="Botchan M.R."/>
            <person name="Bouck J."/>
            <person name="Brokstein P."/>
            <person name="Brottier P."/>
            <person name="Burtis K.C."/>
            <person name="Busam D.A."/>
            <person name="Butler H."/>
            <person name="Cadieu E."/>
            <person name="Center A."/>
            <person name="Chandra I."/>
            <person name="Cherry J.M."/>
            <person name="Cawley S."/>
            <person name="Dahlke C."/>
            <person name="Davenport L.B."/>
            <person name="Davies P."/>
            <person name="de Pablos B."/>
            <person name="Delcher A."/>
            <person name="Deng Z."/>
            <person name="Mays A.D."/>
            <person name="Dew I."/>
            <person name="Dietz S.M."/>
            <person name="Dodson K."/>
            <person name="Doup L.E."/>
            <person name="Downes M."/>
            <person name="Dugan-Rocha S."/>
            <person name="Dunkov B.C."/>
            <person name="Dunn P."/>
            <person name="Durbin K.J."/>
            <person name="Evangelista C.C."/>
            <person name="Ferraz C."/>
            <person name="Ferriera S."/>
            <person name="Fleischmann W."/>
            <person name="Fosler C."/>
            <person name="Gabrielian A.E."/>
            <person name="Garg N.S."/>
            <person name="Gelbart W.M."/>
            <person name="Glasser K."/>
            <person name="Glodek A."/>
            <person name="Gong F."/>
            <person name="Gorrell J.H."/>
            <person name="Gu Z."/>
            <person name="Guan P."/>
            <person name="Harris M."/>
            <person name="Harris N.L."/>
            <person name="Harvey D.A."/>
            <person name="Heiman T.J."/>
            <person name="Hernandez J.R."/>
            <person name="Houck J."/>
            <person name="Hostin D."/>
            <person name="Houston K.A."/>
            <person name="Howland T.J."/>
            <person name="Wei M.-H."/>
            <person name="Ibegwam C."/>
            <person name="Jalali M."/>
            <person name="Kalush F."/>
            <person name="Karpen G.H."/>
            <person name="Ke Z."/>
            <person name="Kennison J.A."/>
            <person name="Ketchum K.A."/>
            <person name="Kimmel B.E."/>
            <person name="Kodira C.D."/>
            <person name="Kraft C.L."/>
            <person name="Kravitz S."/>
            <person name="Kulp D."/>
            <person name="Lai Z."/>
            <person name="Lasko P."/>
            <person name="Lei Y."/>
            <person name="Levitsky A.A."/>
            <person name="Li J.H."/>
            <person name="Li Z."/>
            <person name="Liang Y."/>
            <person name="Lin X."/>
            <person name="Liu X."/>
            <person name="Mattei B."/>
            <person name="McIntosh T.C."/>
            <person name="McLeod M.P."/>
            <person name="McPherson D."/>
            <person name="Merkulov G."/>
            <person name="Milshina N.V."/>
            <person name="Mobarry C."/>
            <person name="Morris J."/>
            <person name="Moshrefi A."/>
            <person name="Mount S.M."/>
            <person name="Moy M."/>
            <person name="Murphy B."/>
            <person name="Murphy L."/>
            <person name="Muzny D.M."/>
            <person name="Nelson D.L."/>
            <person name="Nelson D.R."/>
            <person name="Nelson K.A."/>
            <person name="Nixon K."/>
            <person name="Nusskern D.R."/>
            <person name="Pacleb J.M."/>
            <person name="Palazzolo M."/>
            <person name="Pittman G.S."/>
            <person name="Pan S."/>
            <person name="Pollard J."/>
            <person name="Puri V."/>
            <person name="Reese M.G."/>
            <person name="Reinert K."/>
            <person name="Remington K."/>
            <person name="Saunders R.D.C."/>
            <person name="Scheeler F."/>
            <person name="Shen H."/>
            <person name="Shue B.C."/>
            <person name="Siden-Kiamos I."/>
            <person name="Simpson M."/>
            <person name="Skupski M.P."/>
            <person name="Smith T.J."/>
            <person name="Spier E."/>
            <person name="Spradling A.C."/>
            <person name="Stapleton M."/>
            <person name="Strong R."/>
            <person name="Sun E."/>
            <person name="Svirskas R."/>
            <person name="Tector C."/>
            <person name="Turner R."/>
            <person name="Venter E."/>
            <person name="Wang A.H."/>
            <person name="Wang X."/>
            <person name="Wang Z.-Y."/>
            <person name="Wassarman D.A."/>
            <person name="Weinstock G.M."/>
            <person name="Weissenbach J."/>
            <person name="Williams S.M."/>
            <person name="Woodage T."/>
            <person name="Worley K.C."/>
            <person name="Wu D."/>
            <person name="Yang S."/>
            <person name="Yao Q.A."/>
            <person name="Ye J."/>
            <person name="Yeh R.-F."/>
            <person name="Zaveri J.S."/>
            <person name="Zhan M."/>
            <person name="Zhang G."/>
            <person name="Zhao Q."/>
            <person name="Zheng L."/>
            <person name="Zheng X.H."/>
            <person name="Zhong F.N."/>
            <person name="Zhong W."/>
            <person name="Zhou X."/>
            <person name="Zhu S.C."/>
            <person name="Zhu X."/>
            <person name="Smith H.O."/>
            <person name="Gibbs R.A."/>
            <person name="Myers E.W."/>
            <person name="Rubin G.M."/>
            <person name="Venter J.C."/>
        </authorList>
    </citation>
    <scope>NUCLEOTIDE SEQUENCE [LARGE SCALE GENOMIC DNA]</scope>
    <source>
        <strain>Berkeley</strain>
    </source>
</reference>
<reference key="4">
    <citation type="journal article" date="2002" name="Genome Biol.">
        <title>Annotation of the Drosophila melanogaster euchromatic genome: a systematic review.</title>
        <authorList>
            <person name="Misra S."/>
            <person name="Crosby M.A."/>
            <person name="Mungall C.J."/>
            <person name="Matthews B.B."/>
            <person name="Campbell K.S."/>
            <person name="Hradecky P."/>
            <person name="Huang Y."/>
            <person name="Kaminker J.S."/>
            <person name="Millburn G.H."/>
            <person name="Prochnik S.E."/>
            <person name="Smith C.D."/>
            <person name="Tupy J.L."/>
            <person name="Whitfield E.J."/>
            <person name="Bayraktaroglu L."/>
            <person name="Berman B.P."/>
            <person name="Bettencourt B.R."/>
            <person name="Celniker S.E."/>
            <person name="de Grey A.D.N.J."/>
            <person name="Drysdale R.A."/>
            <person name="Harris N.L."/>
            <person name="Richter J."/>
            <person name="Russo S."/>
            <person name="Schroeder A.J."/>
            <person name="Shu S.Q."/>
            <person name="Stapleton M."/>
            <person name="Yamada C."/>
            <person name="Ashburner M."/>
            <person name="Gelbart W.M."/>
            <person name="Rubin G.M."/>
            <person name="Lewis S.E."/>
        </authorList>
    </citation>
    <scope>GENOME REANNOTATION</scope>
    <source>
        <strain>Berkeley</strain>
    </source>
</reference>
<reference key="5">
    <citation type="journal article" date="2002" name="Genome Biol.">
        <title>A Drosophila full-length cDNA resource.</title>
        <authorList>
            <person name="Stapleton M."/>
            <person name="Carlson J.W."/>
            <person name="Brokstein P."/>
            <person name="Yu C."/>
            <person name="Champe M."/>
            <person name="George R.A."/>
            <person name="Guarin H."/>
            <person name="Kronmiller B."/>
            <person name="Pacleb J.M."/>
            <person name="Park S."/>
            <person name="Wan K.H."/>
            <person name="Rubin G.M."/>
            <person name="Celniker S.E."/>
        </authorList>
    </citation>
    <scope>NUCLEOTIDE SEQUENCE [LARGE SCALE MRNA]</scope>
    <source>
        <strain>Berkeley</strain>
        <tissue>Embryo</tissue>
        <tissue>Ovary</tissue>
    </source>
</reference>